<name>LON_HELPY</name>
<proteinExistence type="inferred from homology"/>
<gene>
    <name evidence="1" type="primary">lon</name>
    <name type="ordered locus">HP_1379</name>
</gene>
<keyword id="KW-0067">ATP-binding</keyword>
<keyword id="KW-0963">Cytoplasm</keyword>
<keyword id="KW-0378">Hydrolase</keyword>
<keyword id="KW-0547">Nucleotide-binding</keyword>
<keyword id="KW-0645">Protease</keyword>
<keyword id="KW-1185">Reference proteome</keyword>
<keyword id="KW-0720">Serine protease</keyword>
<keyword id="KW-0346">Stress response</keyword>
<evidence type="ECO:0000255" key="1">
    <source>
        <dbReference type="HAMAP-Rule" id="MF_01973"/>
    </source>
</evidence>
<evidence type="ECO:0000255" key="2">
    <source>
        <dbReference type="PROSITE-ProRule" id="PRU01122"/>
    </source>
</evidence>
<evidence type="ECO:0000255" key="3">
    <source>
        <dbReference type="PROSITE-ProRule" id="PRU01123"/>
    </source>
</evidence>
<evidence type="ECO:0000256" key="4">
    <source>
        <dbReference type="SAM" id="MobiDB-lite"/>
    </source>
</evidence>
<accession>P55995</accession>
<comment type="function">
    <text evidence="1">ATP-dependent serine protease that mediates the selective degradation of mutant and abnormal proteins as well as certain short-lived regulatory proteins. Required for cellular homeostasis and for survival from DNA damage and developmental changes induced by stress. Degrades polypeptides processively to yield small peptide fragments that are 5 to 10 amino acids long. Binds to DNA in a double-stranded, site-specific manner.</text>
</comment>
<comment type="catalytic activity">
    <reaction evidence="1">
        <text>Hydrolysis of proteins in presence of ATP.</text>
        <dbReference type="EC" id="3.4.21.53"/>
    </reaction>
</comment>
<comment type="subunit">
    <text evidence="1">Homohexamer. Organized in a ring with a central cavity.</text>
</comment>
<comment type="subcellular location">
    <subcellularLocation>
        <location evidence="1">Cytoplasm</location>
    </subcellularLocation>
</comment>
<comment type="induction">
    <text evidence="1">By heat shock.</text>
</comment>
<comment type="similarity">
    <text evidence="1">Belongs to the peptidase S16 family.</text>
</comment>
<sequence length="835" mass="94419">MTEDFPKILPLLVEEDTFLYPFMIAPIFLQNNASIKAVAYAKNNKSLVFIACQKDKLNDNEAPYYDVGVIGSVMREANMPNGRVKLLFNGIAKGRILEPAKENEQGFLEAQISPIEYLEYDKENIQAIVEVLKEKVITLANVSSLFPPDLIKALEDNDDPNRIADLIAAALHLKKDQAYSLFANNNTEQRLLDLIDIVIEETKTQKLQKEIKSKVHQKMEQTNKEYFLKEQLKQIQKELGTDKQRDEDLNQYYQKLESIKPFLKEEAFKEIKKQIDRLSRTHADSSDSATLQNYIETMLDVPFGQYGKKALDIKHVREQLDKDHYSLKRPKERIVEYFATMQLLEMRRKKKPEKKDKTKGTILCFYGPPGVGKTSLANSIAKAIERPLVRIALGGLEDVNELRGHRRTYIGSMPGRIVQGLIEAKKMNPVMVLDEIDKVDRSVRGDPASALLEILDPEQNTAFRDHYANFSIDLSQVIFIATANNIDRIPAPLRDRMEFISVSSYTPNEKEEIAKNYLIPQELEKHALKPSEVEISHECLKLIIEKYTREAGVRDLRRQIATIMRKVALKYLEDNPHQKGRTKKGKNEKSEDQKSEDQKSENQKSENKDFCVSITPNNLKEYLERMVFEIDPIDEENKIGIVNGLAWTPVGGDVLKIEVLKIRGKGELKLTGSLGDVMKESAIIAFSVVKVLLDNETLKVPKIPSETDAEGKKKKKVLKVYNAYDLHLHVPEGATPKDGPSAGIAMASVMASILCDRATRSEVAMTGELTLSGEVLPIGGLKEKLIAAFKAGIKTALIPVKNYERDLDEIPAEVRENLNIVAVKNIAEVLEKTLL</sequence>
<organism>
    <name type="scientific">Helicobacter pylori (strain ATCC 700392 / 26695)</name>
    <name type="common">Campylobacter pylori</name>
    <dbReference type="NCBI Taxonomy" id="85962"/>
    <lineage>
        <taxon>Bacteria</taxon>
        <taxon>Pseudomonadati</taxon>
        <taxon>Campylobacterota</taxon>
        <taxon>Epsilonproteobacteria</taxon>
        <taxon>Campylobacterales</taxon>
        <taxon>Helicobacteraceae</taxon>
        <taxon>Helicobacter</taxon>
    </lineage>
</organism>
<dbReference type="EC" id="3.4.21.53" evidence="1"/>
<dbReference type="EMBL" id="AE000511">
    <property type="protein sequence ID" value="AAD08421.1"/>
    <property type="molecule type" value="Genomic_DNA"/>
</dbReference>
<dbReference type="PIR" id="C64692">
    <property type="entry name" value="C64692"/>
</dbReference>
<dbReference type="RefSeq" id="NP_208170.1">
    <property type="nucleotide sequence ID" value="NC_000915.1"/>
</dbReference>
<dbReference type="RefSeq" id="WP_000133787.1">
    <property type="nucleotide sequence ID" value="NC_018939.1"/>
</dbReference>
<dbReference type="SMR" id="P55995"/>
<dbReference type="DIP" id="DIP-3184N"/>
<dbReference type="FunCoup" id="P55995">
    <property type="interactions" value="371"/>
</dbReference>
<dbReference type="IntAct" id="P55995">
    <property type="interactions" value="8"/>
</dbReference>
<dbReference type="MINT" id="P55995"/>
<dbReference type="STRING" id="85962.HP_1379"/>
<dbReference type="MEROPS" id="S16.001"/>
<dbReference type="PaxDb" id="85962-C694_07120"/>
<dbReference type="EnsemblBacteria" id="AAD08421">
    <property type="protein sequence ID" value="AAD08421"/>
    <property type="gene ID" value="HP_1379"/>
</dbReference>
<dbReference type="KEGG" id="heo:C694_07120"/>
<dbReference type="KEGG" id="hpy:HP_1379"/>
<dbReference type="PATRIC" id="fig|85962.47.peg.1477"/>
<dbReference type="eggNOG" id="COG0466">
    <property type="taxonomic scope" value="Bacteria"/>
</dbReference>
<dbReference type="InParanoid" id="P55995"/>
<dbReference type="OrthoDB" id="9803599at2"/>
<dbReference type="PhylomeDB" id="P55995"/>
<dbReference type="Proteomes" id="UP000000429">
    <property type="component" value="Chromosome"/>
</dbReference>
<dbReference type="GO" id="GO:0005737">
    <property type="term" value="C:cytoplasm"/>
    <property type="evidence" value="ECO:0007669"/>
    <property type="project" value="UniProtKB-SubCell"/>
</dbReference>
<dbReference type="GO" id="GO:0005524">
    <property type="term" value="F:ATP binding"/>
    <property type="evidence" value="ECO:0007669"/>
    <property type="project" value="UniProtKB-UniRule"/>
</dbReference>
<dbReference type="GO" id="GO:0016887">
    <property type="term" value="F:ATP hydrolysis activity"/>
    <property type="evidence" value="ECO:0007669"/>
    <property type="project" value="UniProtKB-UniRule"/>
</dbReference>
<dbReference type="GO" id="GO:0004176">
    <property type="term" value="F:ATP-dependent peptidase activity"/>
    <property type="evidence" value="ECO:0000318"/>
    <property type="project" value="GO_Central"/>
</dbReference>
<dbReference type="GO" id="GO:0043565">
    <property type="term" value="F:sequence-specific DNA binding"/>
    <property type="evidence" value="ECO:0007669"/>
    <property type="project" value="UniProtKB-UniRule"/>
</dbReference>
<dbReference type="GO" id="GO:0004252">
    <property type="term" value="F:serine-type endopeptidase activity"/>
    <property type="evidence" value="ECO:0007669"/>
    <property type="project" value="UniProtKB-UniRule"/>
</dbReference>
<dbReference type="GO" id="GO:0034605">
    <property type="term" value="P:cellular response to heat"/>
    <property type="evidence" value="ECO:0007669"/>
    <property type="project" value="UniProtKB-UniRule"/>
</dbReference>
<dbReference type="GO" id="GO:0006515">
    <property type="term" value="P:protein quality control for misfolded or incompletely synthesized proteins"/>
    <property type="evidence" value="ECO:0000318"/>
    <property type="project" value="GO_Central"/>
</dbReference>
<dbReference type="CDD" id="cd19500">
    <property type="entry name" value="RecA-like_Lon"/>
    <property type="match status" value="1"/>
</dbReference>
<dbReference type="FunFam" id="3.40.50.300:FF:000021">
    <property type="entry name" value="Lon protease homolog"/>
    <property type="match status" value="1"/>
</dbReference>
<dbReference type="Gene3D" id="1.10.8.60">
    <property type="match status" value="1"/>
</dbReference>
<dbReference type="Gene3D" id="1.20.5.5270">
    <property type="match status" value="1"/>
</dbReference>
<dbReference type="Gene3D" id="1.20.58.1480">
    <property type="match status" value="1"/>
</dbReference>
<dbReference type="Gene3D" id="3.30.230.10">
    <property type="match status" value="1"/>
</dbReference>
<dbReference type="Gene3D" id="2.30.130.40">
    <property type="entry name" value="LON domain-like"/>
    <property type="match status" value="1"/>
</dbReference>
<dbReference type="Gene3D" id="3.40.50.300">
    <property type="entry name" value="P-loop containing nucleotide triphosphate hydrolases"/>
    <property type="match status" value="1"/>
</dbReference>
<dbReference type="HAMAP" id="MF_01973">
    <property type="entry name" value="lon_bact"/>
    <property type="match status" value="1"/>
</dbReference>
<dbReference type="InterPro" id="IPR003593">
    <property type="entry name" value="AAA+_ATPase"/>
</dbReference>
<dbReference type="InterPro" id="IPR003959">
    <property type="entry name" value="ATPase_AAA_core"/>
</dbReference>
<dbReference type="InterPro" id="IPR027543">
    <property type="entry name" value="Lon_bac"/>
</dbReference>
<dbReference type="InterPro" id="IPR004815">
    <property type="entry name" value="Lon_bac/euk-typ"/>
</dbReference>
<dbReference type="InterPro" id="IPR054594">
    <property type="entry name" value="Lon_lid"/>
</dbReference>
<dbReference type="InterPro" id="IPR008269">
    <property type="entry name" value="Lon_proteolytic"/>
</dbReference>
<dbReference type="InterPro" id="IPR027065">
    <property type="entry name" value="Lon_Prtase"/>
</dbReference>
<dbReference type="InterPro" id="IPR003111">
    <property type="entry name" value="Lon_prtase_N"/>
</dbReference>
<dbReference type="InterPro" id="IPR046336">
    <property type="entry name" value="Lon_prtase_N_sf"/>
</dbReference>
<dbReference type="InterPro" id="IPR027417">
    <property type="entry name" value="P-loop_NTPase"/>
</dbReference>
<dbReference type="InterPro" id="IPR008268">
    <property type="entry name" value="Peptidase_S16_AS"/>
</dbReference>
<dbReference type="InterPro" id="IPR015947">
    <property type="entry name" value="PUA-like_sf"/>
</dbReference>
<dbReference type="InterPro" id="IPR020568">
    <property type="entry name" value="Ribosomal_Su5_D2-typ_SF"/>
</dbReference>
<dbReference type="InterPro" id="IPR014721">
    <property type="entry name" value="Ribsml_uS5_D2-typ_fold_subgr"/>
</dbReference>
<dbReference type="NCBIfam" id="TIGR00763">
    <property type="entry name" value="lon"/>
    <property type="match status" value="1"/>
</dbReference>
<dbReference type="PANTHER" id="PTHR43718">
    <property type="entry name" value="LON PROTEASE"/>
    <property type="match status" value="1"/>
</dbReference>
<dbReference type="PANTHER" id="PTHR43718:SF2">
    <property type="entry name" value="LON PROTEASE HOMOLOG, MITOCHONDRIAL"/>
    <property type="match status" value="1"/>
</dbReference>
<dbReference type="Pfam" id="PF00004">
    <property type="entry name" value="AAA"/>
    <property type="match status" value="1"/>
</dbReference>
<dbReference type="Pfam" id="PF05362">
    <property type="entry name" value="Lon_C"/>
    <property type="match status" value="1"/>
</dbReference>
<dbReference type="Pfam" id="PF22667">
    <property type="entry name" value="Lon_lid"/>
    <property type="match status" value="1"/>
</dbReference>
<dbReference type="Pfam" id="PF02190">
    <property type="entry name" value="LON_substr_bdg"/>
    <property type="match status" value="1"/>
</dbReference>
<dbReference type="PIRSF" id="PIRSF001174">
    <property type="entry name" value="Lon_proteas"/>
    <property type="match status" value="1"/>
</dbReference>
<dbReference type="PRINTS" id="PR00830">
    <property type="entry name" value="ENDOLAPTASE"/>
</dbReference>
<dbReference type="SMART" id="SM00382">
    <property type="entry name" value="AAA"/>
    <property type="match status" value="1"/>
</dbReference>
<dbReference type="SMART" id="SM00464">
    <property type="entry name" value="LON"/>
    <property type="match status" value="1"/>
</dbReference>
<dbReference type="SUPFAM" id="SSF52540">
    <property type="entry name" value="P-loop containing nucleoside triphosphate hydrolases"/>
    <property type="match status" value="1"/>
</dbReference>
<dbReference type="SUPFAM" id="SSF88697">
    <property type="entry name" value="PUA domain-like"/>
    <property type="match status" value="1"/>
</dbReference>
<dbReference type="SUPFAM" id="SSF54211">
    <property type="entry name" value="Ribosomal protein S5 domain 2-like"/>
    <property type="match status" value="1"/>
</dbReference>
<dbReference type="PROSITE" id="PS51787">
    <property type="entry name" value="LON_N"/>
    <property type="match status" value="1"/>
</dbReference>
<dbReference type="PROSITE" id="PS51786">
    <property type="entry name" value="LON_PROTEOLYTIC"/>
    <property type="match status" value="1"/>
</dbReference>
<dbReference type="PROSITE" id="PS01046">
    <property type="entry name" value="LON_SER"/>
    <property type="match status" value="1"/>
</dbReference>
<feature type="chain" id="PRO_0000076137" description="Lon protease">
    <location>
        <begin position="1"/>
        <end position="835"/>
    </location>
</feature>
<feature type="domain" description="Lon N-terminal" evidence="3">
    <location>
        <begin position="9"/>
        <end position="202"/>
    </location>
</feature>
<feature type="domain" description="Lon proteolytic" evidence="2">
    <location>
        <begin position="636"/>
        <end position="835"/>
    </location>
</feature>
<feature type="region of interest" description="Disordered" evidence="4">
    <location>
        <begin position="574"/>
        <end position="610"/>
    </location>
</feature>
<feature type="compositionally biased region" description="Basic and acidic residues" evidence="4">
    <location>
        <begin position="585"/>
        <end position="609"/>
    </location>
</feature>
<feature type="active site" evidence="1">
    <location>
        <position position="741"/>
    </location>
</feature>
<feature type="active site" evidence="1">
    <location>
        <position position="784"/>
    </location>
</feature>
<feature type="binding site" evidence="1">
    <location>
        <begin position="367"/>
        <end position="374"/>
    </location>
    <ligand>
        <name>ATP</name>
        <dbReference type="ChEBI" id="CHEBI:30616"/>
    </ligand>
</feature>
<reference key="1">
    <citation type="journal article" date="1997" name="Nature">
        <title>The complete genome sequence of the gastric pathogen Helicobacter pylori.</title>
        <authorList>
            <person name="Tomb J.-F."/>
            <person name="White O."/>
            <person name="Kerlavage A.R."/>
            <person name="Clayton R.A."/>
            <person name="Sutton G.G."/>
            <person name="Fleischmann R.D."/>
            <person name="Ketchum K.A."/>
            <person name="Klenk H.-P."/>
            <person name="Gill S.R."/>
            <person name="Dougherty B.A."/>
            <person name="Nelson K.E."/>
            <person name="Quackenbush J."/>
            <person name="Zhou L."/>
            <person name="Kirkness E.F."/>
            <person name="Peterson S.N."/>
            <person name="Loftus B.J."/>
            <person name="Richardson D.L."/>
            <person name="Dodson R.J."/>
            <person name="Khalak H.G."/>
            <person name="Glodek A."/>
            <person name="McKenney K."/>
            <person name="FitzGerald L.M."/>
            <person name="Lee N."/>
            <person name="Adams M.D."/>
            <person name="Hickey E.K."/>
            <person name="Berg D.E."/>
            <person name="Gocayne J.D."/>
            <person name="Utterback T.R."/>
            <person name="Peterson J.D."/>
            <person name="Kelley J.M."/>
            <person name="Cotton M.D."/>
            <person name="Weidman J.F."/>
            <person name="Fujii C."/>
            <person name="Bowman C."/>
            <person name="Watthey L."/>
            <person name="Wallin E."/>
            <person name="Hayes W.S."/>
            <person name="Borodovsky M."/>
            <person name="Karp P.D."/>
            <person name="Smith H.O."/>
            <person name="Fraser C.M."/>
            <person name="Venter J.C."/>
        </authorList>
    </citation>
    <scope>NUCLEOTIDE SEQUENCE [LARGE SCALE GENOMIC DNA]</scope>
    <source>
        <strain>ATCC 700392 / 26695</strain>
    </source>
</reference>
<protein>
    <recommendedName>
        <fullName evidence="1">Lon protease</fullName>
        <ecNumber evidence="1">3.4.21.53</ecNumber>
    </recommendedName>
    <alternativeName>
        <fullName evidence="1">ATP-dependent protease La</fullName>
    </alternativeName>
</protein>